<organism>
    <name type="scientific">Legionella pneumophila (strain Lens)</name>
    <dbReference type="NCBI Taxonomy" id="297245"/>
    <lineage>
        <taxon>Bacteria</taxon>
        <taxon>Pseudomonadati</taxon>
        <taxon>Pseudomonadota</taxon>
        <taxon>Gammaproteobacteria</taxon>
        <taxon>Legionellales</taxon>
        <taxon>Legionellaceae</taxon>
        <taxon>Legionella</taxon>
    </lineage>
</organism>
<proteinExistence type="inferred from homology"/>
<keyword id="KW-0067">ATP-binding</keyword>
<keyword id="KW-0131">Cell cycle</keyword>
<keyword id="KW-0132">Cell division</keyword>
<keyword id="KW-0133">Cell shape</keyword>
<keyword id="KW-0961">Cell wall biogenesis/degradation</keyword>
<keyword id="KW-0963">Cytoplasm</keyword>
<keyword id="KW-0436">Ligase</keyword>
<keyword id="KW-0547">Nucleotide-binding</keyword>
<keyword id="KW-0573">Peptidoglycan synthesis</keyword>
<gene>
    <name evidence="1" type="primary">murD</name>
    <name type="ordered locus">lpl2539</name>
</gene>
<feature type="chain" id="PRO_0000109032" description="UDP-N-acetylmuramoylalanine--D-glutamate ligase">
    <location>
        <begin position="1"/>
        <end position="447"/>
    </location>
</feature>
<feature type="binding site" evidence="1">
    <location>
        <begin position="112"/>
        <end position="118"/>
    </location>
    <ligand>
        <name>ATP</name>
        <dbReference type="ChEBI" id="CHEBI:30616"/>
    </ligand>
</feature>
<dbReference type="EC" id="6.3.2.9" evidence="1"/>
<dbReference type="EMBL" id="CR628337">
    <property type="protein sequence ID" value="CAH16779.1"/>
    <property type="molecule type" value="Genomic_DNA"/>
</dbReference>
<dbReference type="RefSeq" id="WP_011216491.1">
    <property type="nucleotide sequence ID" value="NC_006369.1"/>
</dbReference>
<dbReference type="SMR" id="Q5WTI5"/>
<dbReference type="KEGG" id="lpf:lpl2539"/>
<dbReference type="LegioList" id="lpl2539"/>
<dbReference type="HOGENOM" id="CLU_032540_1_0_6"/>
<dbReference type="UniPathway" id="UPA00219"/>
<dbReference type="Proteomes" id="UP000002517">
    <property type="component" value="Chromosome"/>
</dbReference>
<dbReference type="GO" id="GO:0005737">
    <property type="term" value="C:cytoplasm"/>
    <property type="evidence" value="ECO:0007669"/>
    <property type="project" value="UniProtKB-SubCell"/>
</dbReference>
<dbReference type="GO" id="GO:0005524">
    <property type="term" value="F:ATP binding"/>
    <property type="evidence" value="ECO:0007669"/>
    <property type="project" value="UniProtKB-UniRule"/>
</dbReference>
<dbReference type="GO" id="GO:0008764">
    <property type="term" value="F:UDP-N-acetylmuramoylalanine-D-glutamate ligase activity"/>
    <property type="evidence" value="ECO:0007669"/>
    <property type="project" value="UniProtKB-UniRule"/>
</dbReference>
<dbReference type="GO" id="GO:0051301">
    <property type="term" value="P:cell division"/>
    <property type="evidence" value="ECO:0007669"/>
    <property type="project" value="UniProtKB-KW"/>
</dbReference>
<dbReference type="GO" id="GO:0071555">
    <property type="term" value="P:cell wall organization"/>
    <property type="evidence" value="ECO:0007669"/>
    <property type="project" value="UniProtKB-KW"/>
</dbReference>
<dbReference type="GO" id="GO:0009252">
    <property type="term" value="P:peptidoglycan biosynthetic process"/>
    <property type="evidence" value="ECO:0007669"/>
    <property type="project" value="UniProtKB-UniRule"/>
</dbReference>
<dbReference type="GO" id="GO:0008360">
    <property type="term" value="P:regulation of cell shape"/>
    <property type="evidence" value="ECO:0007669"/>
    <property type="project" value="UniProtKB-KW"/>
</dbReference>
<dbReference type="Gene3D" id="3.90.190.20">
    <property type="entry name" value="Mur ligase, C-terminal domain"/>
    <property type="match status" value="1"/>
</dbReference>
<dbReference type="Gene3D" id="3.40.1190.10">
    <property type="entry name" value="Mur-like, catalytic domain"/>
    <property type="match status" value="1"/>
</dbReference>
<dbReference type="Gene3D" id="3.40.50.720">
    <property type="entry name" value="NAD(P)-binding Rossmann-like Domain"/>
    <property type="match status" value="1"/>
</dbReference>
<dbReference type="HAMAP" id="MF_00639">
    <property type="entry name" value="MurD"/>
    <property type="match status" value="1"/>
</dbReference>
<dbReference type="InterPro" id="IPR036565">
    <property type="entry name" value="Mur-like_cat_sf"/>
</dbReference>
<dbReference type="InterPro" id="IPR004101">
    <property type="entry name" value="Mur_ligase_C"/>
</dbReference>
<dbReference type="InterPro" id="IPR036615">
    <property type="entry name" value="Mur_ligase_C_dom_sf"/>
</dbReference>
<dbReference type="InterPro" id="IPR013221">
    <property type="entry name" value="Mur_ligase_cen"/>
</dbReference>
<dbReference type="InterPro" id="IPR005762">
    <property type="entry name" value="MurD"/>
</dbReference>
<dbReference type="NCBIfam" id="TIGR01087">
    <property type="entry name" value="murD"/>
    <property type="match status" value="1"/>
</dbReference>
<dbReference type="PANTHER" id="PTHR43692">
    <property type="entry name" value="UDP-N-ACETYLMURAMOYLALANINE--D-GLUTAMATE LIGASE"/>
    <property type="match status" value="1"/>
</dbReference>
<dbReference type="PANTHER" id="PTHR43692:SF1">
    <property type="entry name" value="UDP-N-ACETYLMURAMOYLALANINE--D-GLUTAMATE LIGASE"/>
    <property type="match status" value="1"/>
</dbReference>
<dbReference type="Pfam" id="PF02875">
    <property type="entry name" value="Mur_ligase_C"/>
    <property type="match status" value="1"/>
</dbReference>
<dbReference type="Pfam" id="PF08245">
    <property type="entry name" value="Mur_ligase_M"/>
    <property type="match status" value="1"/>
</dbReference>
<dbReference type="Pfam" id="PF21799">
    <property type="entry name" value="MurD-like_N"/>
    <property type="match status" value="1"/>
</dbReference>
<dbReference type="SUPFAM" id="SSF51984">
    <property type="entry name" value="MurCD N-terminal domain"/>
    <property type="match status" value="1"/>
</dbReference>
<dbReference type="SUPFAM" id="SSF53623">
    <property type="entry name" value="MurD-like peptide ligases, catalytic domain"/>
    <property type="match status" value="1"/>
</dbReference>
<dbReference type="SUPFAM" id="SSF53244">
    <property type="entry name" value="MurD-like peptide ligases, peptide-binding domain"/>
    <property type="match status" value="1"/>
</dbReference>
<protein>
    <recommendedName>
        <fullName evidence="1">UDP-N-acetylmuramoylalanine--D-glutamate ligase</fullName>
        <ecNumber evidence="1">6.3.2.9</ecNumber>
    </recommendedName>
    <alternativeName>
        <fullName evidence="1">D-glutamic acid-adding enzyme</fullName>
    </alternativeName>
    <alternativeName>
        <fullName evidence="1">UDP-N-acetylmuramoyl-L-alanyl-D-glutamate synthetase</fullName>
    </alternativeName>
</protein>
<sequence>MNHSLYLVAGLGKTGLSIARYLKRNNKSFVVFDTRKEAPGLAEFQNEFPDVPIYLQQTPDEVISQVTDVITSPGLALDTPVLESARQAGALIYGDIECLAREISAPVIAITGTNGKSTVTTLVGEMAKAAGFRVAVAGNIGTPVLDMLDDEHHYDLWVLELSSFQLDLTYSLSPVVATILNVTPDHLDRHHTMEAYTQAKQRIYRGAKAVLFNREDVYTVPHQSCQADIKCISFGKDAPSMGNWGLIEQENTIYLAKGMERLLPVESILIKGVHNWMNALAACALAEAAGISMQHILNVLKTFPGLPHRCQWVREVDGVGWINDSKGTNIGATISAINGIGGSMQGKIVLIAGGQGKGADFQELAQPVSEFVRSIVLIGEDADKIESALAKVVPVVRASSLEGAVTIAKTCAKPGDVVLLSPACASLDMFRDFNHRGDVFTSSVRGL</sequence>
<evidence type="ECO:0000255" key="1">
    <source>
        <dbReference type="HAMAP-Rule" id="MF_00639"/>
    </source>
</evidence>
<reference key="1">
    <citation type="journal article" date="2004" name="Nat. Genet.">
        <title>Evidence in the Legionella pneumophila genome for exploitation of host cell functions and high genome plasticity.</title>
        <authorList>
            <person name="Cazalet C."/>
            <person name="Rusniok C."/>
            <person name="Brueggemann H."/>
            <person name="Zidane N."/>
            <person name="Magnier A."/>
            <person name="Ma L."/>
            <person name="Tichit M."/>
            <person name="Jarraud S."/>
            <person name="Bouchier C."/>
            <person name="Vandenesch F."/>
            <person name="Kunst F."/>
            <person name="Etienne J."/>
            <person name="Glaser P."/>
            <person name="Buchrieser C."/>
        </authorList>
    </citation>
    <scope>NUCLEOTIDE SEQUENCE [LARGE SCALE GENOMIC DNA]</scope>
    <source>
        <strain>Lens</strain>
    </source>
</reference>
<accession>Q5WTI5</accession>
<name>MURD_LEGPL</name>
<comment type="function">
    <text evidence="1">Cell wall formation. Catalyzes the addition of glutamate to the nucleotide precursor UDP-N-acetylmuramoyl-L-alanine (UMA).</text>
</comment>
<comment type="catalytic activity">
    <reaction evidence="1">
        <text>UDP-N-acetyl-alpha-D-muramoyl-L-alanine + D-glutamate + ATP = UDP-N-acetyl-alpha-D-muramoyl-L-alanyl-D-glutamate + ADP + phosphate + H(+)</text>
        <dbReference type="Rhea" id="RHEA:16429"/>
        <dbReference type="ChEBI" id="CHEBI:15378"/>
        <dbReference type="ChEBI" id="CHEBI:29986"/>
        <dbReference type="ChEBI" id="CHEBI:30616"/>
        <dbReference type="ChEBI" id="CHEBI:43474"/>
        <dbReference type="ChEBI" id="CHEBI:83898"/>
        <dbReference type="ChEBI" id="CHEBI:83900"/>
        <dbReference type="ChEBI" id="CHEBI:456216"/>
        <dbReference type="EC" id="6.3.2.9"/>
    </reaction>
</comment>
<comment type="pathway">
    <text evidence="1">Cell wall biogenesis; peptidoglycan biosynthesis.</text>
</comment>
<comment type="subcellular location">
    <subcellularLocation>
        <location evidence="1">Cytoplasm</location>
    </subcellularLocation>
</comment>
<comment type="similarity">
    <text evidence="1">Belongs to the MurCDEF family.</text>
</comment>